<feature type="chain" id="PRO_0000163122" description="DNA-directed RNA polymerase subunit epsilon">
    <location>
        <begin position="1"/>
        <end position="70"/>
    </location>
</feature>
<organism>
    <name type="scientific">Bacillus thuringiensis subsp. konkukian (strain 97-27)</name>
    <dbReference type="NCBI Taxonomy" id="281309"/>
    <lineage>
        <taxon>Bacteria</taxon>
        <taxon>Bacillati</taxon>
        <taxon>Bacillota</taxon>
        <taxon>Bacilli</taxon>
        <taxon>Bacillales</taxon>
        <taxon>Bacillaceae</taxon>
        <taxon>Bacillus</taxon>
        <taxon>Bacillus cereus group</taxon>
    </lineage>
</organism>
<keyword id="KW-0240">DNA-directed RNA polymerase</keyword>
<keyword id="KW-0548">Nucleotidyltransferase</keyword>
<keyword id="KW-0804">Transcription</keyword>
<keyword id="KW-0808">Transferase</keyword>
<gene>
    <name evidence="1" type="primary">rpoY</name>
    <name type="ordered locus">BT9727_3718</name>
</gene>
<dbReference type="EC" id="2.7.7.6" evidence="1"/>
<dbReference type="EMBL" id="AE017355">
    <property type="protein sequence ID" value="AAT61580.1"/>
    <property type="molecule type" value="Genomic_DNA"/>
</dbReference>
<dbReference type="RefSeq" id="WP_000576443.1">
    <property type="nucleotide sequence ID" value="NC_005957.1"/>
</dbReference>
<dbReference type="RefSeq" id="YP_038037.1">
    <property type="nucleotide sequence ID" value="NC_005957.1"/>
</dbReference>
<dbReference type="SMR" id="Q6HEI9"/>
<dbReference type="KEGG" id="btk:BT9727_3718"/>
<dbReference type="PATRIC" id="fig|281309.8.peg.3960"/>
<dbReference type="HOGENOM" id="CLU_187518_0_0_9"/>
<dbReference type="Proteomes" id="UP000001301">
    <property type="component" value="Chromosome"/>
</dbReference>
<dbReference type="GO" id="GO:0000428">
    <property type="term" value="C:DNA-directed RNA polymerase complex"/>
    <property type="evidence" value="ECO:0007669"/>
    <property type="project" value="UniProtKB-KW"/>
</dbReference>
<dbReference type="GO" id="GO:0003677">
    <property type="term" value="F:DNA binding"/>
    <property type="evidence" value="ECO:0007669"/>
    <property type="project" value="UniProtKB-UniRule"/>
</dbReference>
<dbReference type="GO" id="GO:0003899">
    <property type="term" value="F:DNA-directed RNA polymerase activity"/>
    <property type="evidence" value="ECO:0007669"/>
    <property type="project" value="UniProtKB-UniRule"/>
</dbReference>
<dbReference type="GO" id="GO:0006351">
    <property type="term" value="P:DNA-templated transcription"/>
    <property type="evidence" value="ECO:0007669"/>
    <property type="project" value="UniProtKB-UniRule"/>
</dbReference>
<dbReference type="Gene3D" id="3.10.20.730">
    <property type="entry name" value="RNAP, epsilon subunit-like"/>
    <property type="match status" value="1"/>
</dbReference>
<dbReference type="HAMAP" id="MF_01553">
    <property type="entry name" value="RNApol_bact_RpoY"/>
    <property type="match status" value="1"/>
</dbReference>
<dbReference type="InterPro" id="IPR009907">
    <property type="entry name" value="RpoY"/>
</dbReference>
<dbReference type="NCBIfam" id="NF010188">
    <property type="entry name" value="PRK13667.1"/>
    <property type="match status" value="1"/>
</dbReference>
<dbReference type="Pfam" id="PF07288">
    <property type="entry name" value="RpoY"/>
    <property type="match status" value="1"/>
</dbReference>
<comment type="function">
    <text evidence="1">A non-essential component of RNA polymerase (RNAP).</text>
</comment>
<comment type="catalytic activity">
    <reaction evidence="1">
        <text>RNA(n) + a ribonucleoside 5'-triphosphate = RNA(n+1) + diphosphate</text>
        <dbReference type="Rhea" id="RHEA:21248"/>
        <dbReference type="Rhea" id="RHEA-COMP:14527"/>
        <dbReference type="Rhea" id="RHEA-COMP:17342"/>
        <dbReference type="ChEBI" id="CHEBI:33019"/>
        <dbReference type="ChEBI" id="CHEBI:61557"/>
        <dbReference type="ChEBI" id="CHEBI:140395"/>
        <dbReference type="EC" id="2.7.7.6"/>
    </reaction>
</comment>
<comment type="subunit">
    <text evidence="1">RNAP is composed of a core of 2 alpha, a beta and a beta' subunit. The core is associated with a delta subunit, and at least one of epsilon or omega. When a sigma factor is associated with the core the holoenzyme is formed, which can initiate transcription.</text>
</comment>
<comment type="similarity">
    <text evidence="1">Belongs to the RNA polymerase subunit epsilon family.</text>
</comment>
<accession>Q6HEI9</accession>
<proteinExistence type="inferred from homology"/>
<evidence type="ECO:0000255" key="1">
    <source>
        <dbReference type="HAMAP-Rule" id="MF_01553"/>
    </source>
</evidence>
<sequence length="70" mass="8189">MIFKVFYQEKMTEVPVRENTKVLYLEATSEKDVRTKLNKFAYNIEFVQSVTGNHLEYEKANADLTLAEIV</sequence>
<reference key="1">
    <citation type="journal article" date="2006" name="J. Bacteriol.">
        <title>Pathogenomic sequence analysis of Bacillus cereus and Bacillus thuringiensis isolates closely related to Bacillus anthracis.</title>
        <authorList>
            <person name="Han C.S."/>
            <person name="Xie G."/>
            <person name="Challacombe J.F."/>
            <person name="Altherr M.R."/>
            <person name="Bhotika S.S."/>
            <person name="Bruce D."/>
            <person name="Campbell C.S."/>
            <person name="Campbell M.L."/>
            <person name="Chen J."/>
            <person name="Chertkov O."/>
            <person name="Cleland C."/>
            <person name="Dimitrijevic M."/>
            <person name="Doggett N.A."/>
            <person name="Fawcett J.J."/>
            <person name="Glavina T."/>
            <person name="Goodwin L.A."/>
            <person name="Hill K.K."/>
            <person name="Hitchcock P."/>
            <person name="Jackson P.J."/>
            <person name="Keim P."/>
            <person name="Kewalramani A.R."/>
            <person name="Longmire J."/>
            <person name="Lucas S."/>
            <person name="Malfatti S."/>
            <person name="McMurry K."/>
            <person name="Meincke L.J."/>
            <person name="Misra M."/>
            <person name="Moseman B.L."/>
            <person name="Mundt M."/>
            <person name="Munk A.C."/>
            <person name="Okinaka R.T."/>
            <person name="Parson-Quintana B."/>
            <person name="Reilly L.P."/>
            <person name="Richardson P."/>
            <person name="Robinson D.L."/>
            <person name="Rubin E."/>
            <person name="Saunders E."/>
            <person name="Tapia R."/>
            <person name="Tesmer J.G."/>
            <person name="Thayer N."/>
            <person name="Thompson L.S."/>
            <person name="Tice H."/>
            <person name="Ticknor L.O."/>
            <person name="Wills P.L."/>
            <person name="Brettin T.S."/>
            <person name="Gilna P."/>
        </authorList>
    </citation>
    <scope>NUCLEOTIDE SEQUENCE [LARGE SCALE GENOMIC DNA]</scope>
    <source>
        <strain>97-27</strain>
    </source>
</reference>
<name>RPOY_BACHK</name>
<protein>
    <recommendedName>
        <fullName evidence="1">DNA-directed RNA polymerase subunit epsilon</fullName>
        <shortName evidence="1">RNAP epsilon subunit</shortName>
        <ecNumber evidence="1">2.7.7.6</ecNumber>
    </recommendedName>
    <alternativeName>
        <fullName evidence="1">RNA polymerase epsilon subunit</fullName>
    </alternativeName>
    <alternativeName>
        <fullName evidence="1">Transcriptase subunit epsilon</fullName>
    </alternativeName>
</protein>